<gene>
    <name type="primary">PA</name>
    <name type="ordered locus">Segment 3</name>
</gene>
<feature type="chain" id="PRO_0000443070" description="Polymerase acidic protein">
    <location>
        <begin position="1"/>
        <end position="688"/>
    </location>
</feature>
<feature type="region of interest" description="Disordered" evidence="3">
    <location>
        <begin position="54"/>
        <end position="82"/>
    </location>
</feature>
<feature type="region of interest" description="Disordered" evidence="3">
    <location>
        <begin position="110"/>
        <end position="129"/>
    </location>
</feature>
<feature type="compositionally biased region" description="Basic and acidic residues" evidence="3">
    <location>
        <begin position="56"/>
        <end position="65"/>
    </location>
</feature>
<feature type="compositionally biased region" description="Acidic residues" evidence="3">
    <location>
        <begin position="119"/>
        <end position="129"/>
    </location>
</feature>
<dbReference type="EMBL" id="GQ499303">
    <property type="protein sequence ID" value="ACY56279.1"/>
    <property type="molecule type" value="Genomic_RNA"/>
</dbReference>
<dbReference type="Proteomes" id="UP000029941">
    <property type="component" value="Genome"/>
</dbReference>
<dbReference type="GO" id="GO:0042025">
    <property type="term" value="C:host cell nucleus"/>
    <property type="evidence" value="ECO:0007669"/>
    <property type="project" value="UniProtKB-SubCell"/>
</dbReference>
<dbReference type="GO" id="GO:0044423">
    <property type="term" value="C:virion component"/>
    <property type="evidence" value="ECO:0007669"/>
    <property type="project" value="UniProtKB-KW"/>
</dbReference>
<reference key="1">
    <citation type="journal article" date="2009" name="J. Virol.">
        <title>Quaranfil, Johnston Atoll, and Lake Chad viruses are novel members of the family Orthomyxoviridae.</title>
        <authorList>
            <person name="Presti R.M."/>
            <person name="Zhao G."/>
            <person name="Beatty W.L."/>
            <person name="Mihindukulasuriya K.A."/>
            <person name="da Rosa A.P."/>
            <person name="Popov V.L."/>
            <person name="Tesh R.B."/>
            <person name="Virgin H.W."/>
            <person name="Wang D."/>
        </authorList>
    </citation>
    <scope>NUCLEOTIDE SEQUENCE [GENOMIC RNA]</scope>
</reference>
<name>PA_QRFVE</name>
<organismHost>
    <name type="scientific">Ixodidae</name>
    <name type="common">hardbacked ticks</name>
    <dbReference type="NCBI Taxonomy" id="6939"/>
</organismHost>
<comment type="function">
    <text evidence="2">subunit of the RNA-dependent RNA polymerase which is responsible for replication and transcription of virus RNA segments. The transcription of viral mRNAs occurs by a unique mechanism called cap-snatching. 5' methylated caps of cellular mRNAs are cleaved after 10-13 nucleotides by PA. In turn, these short capped RNAs are used as primers by PB1 for transcription of viral mRNAs. During virus replication, PB1 initiates RNA synthesis and copy vRNA into complementary RNA (cRNA) which in turn serves as a template for the production of more vRNAs.</text>
</comment>
<comment type="subunit">
    <text evidence="1">RNA polymerase is composed of three subunits: PA, PB1 and PB2.</text>
</comment>
<comment type="subcellular location">
    <subcellularLocation>
        <location>Virion</location>
    </subcellularLocation>
    <subcellularLocation>
        <location evidence="4">Host nucleus</location>
    </subcellularLocation>
</comment>
<proteinExistence type="inferred from homology"/>
<sequence>MAFEAYRLLIANPQLYEPDFVSQAGELSEHWARENWKRREESLRHDKVCMLLMNTEPRERSHTQAEGEEEGSSSRSLATEEGEKRFSLEALEGLVDQGREVLLENLEMEEAQANSDSEGPNEADSGGEGEEFVFGVESESEMEVASEVTKLLEPDLIDSNFRYTLLEGVTSGKFAQMEFTALWGINTNNKWDLVDRVNRKLIEVKVTTRPPTGVWEEVVAHAEGTDPEHNGAYIIHDDLCGNFTPYKFGNISDLPGWPSAQDFPIRRHAFLASYGGVPSAGGIEEGLPAWDDVFMERTRNWVAPLWKKGPISVRRDDCPRMEPFNITKFITLLEDPRLRNTDKSAKWKGKILPVSWCRTIISSQEKDIDMVQEVIRDLGVIGLWEEINANPVKVERTVSALSELMRLFQEGFREKNPYISVKRKCKGWVITGHKQTPALTDTLLELGVGYKPYQMSNVVEEDMRQCETDDIEKMKWVDWMSKLAATESEPLGSKVSRDDIFKEAESRHVLDEPAKKMCSKVYDLYRSHKIGATCSKFMGFYSRMGGSYLRAIAGNSRQHSSLAIMPLYYKTYQEDGTSTRHLTGLVIRGPHHVRESTDTINLLIVEKTCLSRREAQERLSGGALVNGVWWVRKNAIRKADPTYLAFLHNSLFVPTNFLGELVTTPKHFLRQRQPRILGRNPVWQLWLL</sequence>
<keyword id="KW-1048">Host nucleus</keyword>
<keyword id="KW-1185">Reference proteome</keyword>
<keyword id="KW-0946">Virion</keyword>
<evidence type="ECO:0000250" key="1">
    <source>
        <dbReference type="UniProtKB" id="P03431"/>
    </source>
</evidence>
<evidence type="ECO:0000250" key="2">
    <source>
        <dbReference type="UniProtKB" id="P03433"/>
    </source>
</evidence>
<evidence type="ECO:0000256" key="3">
    <source>
        <dbReference type="SAM" id="MobiDB-lite"/>
    </source>
</evidence>
<evidence type="ECO:0000305" key="4"/>
<organism>
    <name type="scientific">Quaranfil virus (isolate QrfV/Tick/Afghanistan/EG_T_377/1968)</name>
    <name type="common">QRFV</name>
    <dbReference type="NCBI Taxonomy" id="1559362"/>
    <lineage>
        <taxon>Viruses</taxon>
        <taxon>Riboviria</taxon>
        <taxon>Orthornavirae</taxon>
        <taxon>Negarnaviricota</taxon>
        <taxon>Polyploviricotina</taxon>
        <taxon>Insthoviricetes</taxon>
        <taxon>Articulavirales</taxon>
        <taxon>Orthomyxoviridae</taxon>
        <taxon>Quaranjavirus</taxon>
        <taxon>Quaranjavirus quaranfilense</taxon>
    </lineage>
</organism>
<accession>D0UFC8</accession>
<protein>
    <recommendedName>
        <fullName>Polymerase acidic protein</fullName>
        <shortName>PA</shortName>
    </recommendedName>
</protein>